<proteinExistence type="inferred from homology"/>
<evidence type="ECO:0000255" key="1">
    <source>
        <dbReference type="HAMAP-Rule" id="MF_00627"/>
    </source>
</evidence>
<comment type="function">
    <text evidence="1">Catalyzes the NAD(+)-dependent oxidation of L-threonine to 2-amino-3-ketobutyrate.</text>
</comment>
<comment type="catalytic activity">
    <reaction evidence="1">
        <text>L-threonine + NAD(+) = (2S)-2-amino-3-oxobutanoate + NADH + H(+)</text>
        <dbReference type="Rhea" id="RHEA:13161"/>
        <dbReference type="ChEBI" id="CHEBI:15378"/>
        <dbReference type="ChEBI" id="CHEBI:57540"/>
        <dbReference type="ChEBI" id="CHEBI:57926"/>
        <dbReference type="ChEBI" id="CHEBI:57945"/>
        <dbReference type="ChEBI" id="CHEBI:78948"/>
        <dbReference type="EC" id="1.1.1.103"/>
    </reaction>
</comment>
<comment type="cofactor">
    <cofactor evidence="1">
        <name>Zn(2+)</name>
        <dbReference type="ChEBI" id="CHEBI:29105"/>
    </cofactor>
    <text evidence="1">Binds 2 Zn(2+) ions per subunit.</text>
</comment>
<comment type="pathway">
    <text evidence="1">Amino-acid degradation; L-threonine degradation via oxydo-reductase pathway; glycine from L-threonine: step 1/2.</text>
</comment>
<comment type="subunit">
    <text evidence="1">Homotetramer.</text>
</comment>
<comment type="subcellular location">
    <subcellularLocation>
        <location evidence="1">Cytoplasm</location>
    </subcellularLocation>
</comment>
<comment type="similarity">
    <text evidence="1">Belongs to the zinc-containing alcohol dehydrogenase family.</text>
</comment>
<dbReference type="EC" id="1.1.1.103" evidence="1"/>
<dbReference type="EMBL" id="BA000012">
    <property type="protein sequence ID" value="BAB53884.1"/>
    <property type="molecule type" value="Genomic_DNA"/>
</dbReference>
<dbReference type="RefSeq" id="WP_010915510.1">
    <property type="nucleotide sequence ID" value="NC_002678.2"/>
</dbReference>
<dbReference type="SMR" id="Q983J7"/>
<dbReference type="KEGG" id="mlo:mlr8299"/>
<dbReference type="PATRIC" id="fig|266835.9.peg.6630"/>
<dbReference type="eggNOG" id="COG1063">
    <property type="taxonomic scope" value="Bacteria"/>
</dbReference>
<dbReference type="HOGENOM" id="CLU_026673_11_0_5"/>
<dbReference type="UniPathway" id="UPA00046">
    <property type="reaction ID" value="UER00505"/>
</dbReference>
<dbReference type="Proteomes" id="UP000000552">
    <property type="component" value="Chromosome"/>
</dbReference>
<dbReference type="GO" id="GO:0005737">
    <property type="term" value="C:cytoplasm"/>
    <property type="evidence" value="ECO:0007669"/>
    <property type="project" value="UniProtKB-SubCell"/>
</dbReference>
<dbReference type="GO" id="GO:0008743">
    <property type="term" value="F:L-threonine 3-dehydrogenase activity"/>
    <property type="evidence" value="ECO:0007669"/>
    <property type="project" value="UniProtKB-UniRule"/>
</dbReference>
<dbReference type="GO" id="GO:0008270">
    <property type="term" value="F:zinc ion binding"/>
    <property type="evidence" value="ECO:0007669"/>
    <property type="project" value="UniProtKB-UniRule"/>
</dbReference>
<dbReference type="GO" id="GO:0019518">
    <property type="term" value="P:L-threonine catabolic process to glycine"/>
    <property type="evidence" value="ECO:0007669"/>
    <property type="project" value="UniProtKB-UniPathway"/>
</dbReference>
<dbReference type="Gene3D" id="3.90.180.10">
    <property type="entry name" value="Medium-chain alcohol dehydrogenases, catalytic domain"/>
    <property type="match status" value="1"/>
</dbReference>
<dbReference type="Gene3D" id="3.40.50.720">
    <property type="entry name" value="NAD(P)-binding Rossmann-like Domain"/>
    <property type="match status" value="1"/>
</dbReference>
<dbReference type="HAMAP" id="MF_00627">
    <property type="entry name" value="Thr_dehydrog"/>
    <property type="match status" value="1"/>
</dbReference>
<dbReference type="InterPro" id="IPR013149">
    <property type="entry name" value="ADH-like_C"/>
</dbReference>
<dbReference type="InterPro" id="IPR013154">
    <property type="entry name" value="ADH-like_N"/>
</dbReference>
<dbReference type="InterPro" id="IPR002328">
    <property type="entry name" value="ADH_Zn_CS"/>
</dbReference>
<dbReference type="InterPro" id="IPR011032">
    <property type="entry name" value="GroES-like_sf"/>
</dbReference>
<dbReference type="InterPro" id="IPR004627">
    <property type="entry name" value="L-Threonine_3-DHase"/>
</dbReference>
<dbReference type="InterPro" id="IPR036291">
    <property type="entry name" value="NAD(P)-bd_dom_sf"/>
</dbReference>
<dbReference type="InterPro" id="IPR050129">
    <property type="entry name" value="Zn_alcohol_dh"/>
</dbReference>
<dbReference type="NCBIfam" id="NF003808">
    <property type="entry name" value="PRK05396.1"/>
    <property type="match status" value="1"/>
</dbReference>
<dbReference type="NCBIfam" id="TIGR00692">
    <property type="entry name" value="tdh"/>
    <property type="match status" value="1"/>
</dbReference>
<dbReference type="PANTHER" id="PTHR43401">
    <property type="entry name" value="L-THREONINE 3-DEHYDROGENASE"/>
    <property type="match status" value="1"/>
</dbReference>
<dbReference type="PANTHER" id="PTHR43401:SF2">
    <property type="entry name" value="L-THREONINE 3-DEHYDROGENASE"/>
    <property type="match status" value="1"/>
</dbReference>
<dbReference type="Pfam" id="PF08240">
    <property type="entry name" value="ADH_N"/>
    <property type="match status" value="1"/>
</dbReference>
<dbReference type="Pfam" id="PF00107">
    <property type="entry name" value="ADH_zinc_N"/>
    <property type="match status" value="1"/>
</dbReference>
<dbReference type="SUPFAM" id="SSF50129">
    <property type="entry name" value="GroES-like"/>
    <property type="match status" value="1"/>
</dbReference>
<dbReference type="SUPFAM" id="SSF51735">
    <property type="entry name" value="NAD(P)-binding Rossmann-fold domains"/>
    <property type="match status" value="1"/>
</dbReference>
<dbReference type="PROSITE" id="PS00059">
    <property type="entry name" value="ADH_ZINC"/>
    <property type="match status" value="1"/>
</dbReference>
<gene>
    <name evidence="1" type="primary">tdh</name>
    <name type="ordered locus">mlr8299</name>
</gene>
<keyword id="KW-0963">Cytoplasm</keyword>
<keyword id="KW-0479">Metal-binding</keyword>
<keyword id="KW-0520">NAD</keyword>
<keyword id="KW-0560">Oxidoreductase</keyword>
<keyword id="KW-0862">Zinc</keyword>
<organism>
    <name type="scientific">Mesorhizobium japonicum (strain LMG 29417 / CECT 9101 / MAFF 303099)</name>
    <name type="common">Mesorhizobium loti (strain MAFF 303099)</name>
    <dbReference type="NCBI Taxonomy" id="266835"/>
    <lineage>
        <taxon>Bacteria</taxon>
        <taxon>Pseudomonadati</taxon>
        <taxon>Pseudomonadota</taxon>
        <taxon>Alphaproteobacteria</taxon>
        <taxon>Hyphomicrobiales</taxon>
        <taxon>Phyllobacteriaceae</taxon>
        <taxon>Mesorhizobium</taxon>
    </lineage>
</organism>
<reference key="1">
    <citation type="journal article" date="2000" name="DNA Res.">
        <title>Complete genome structure of the nitrogen-fixing symbiotic bacterium Mesorhizobium loti.</title>
        <authorList>
            <person name="Kaneko T."/>
            <person name="Nakamura Y."/>
            <person name="Sato S."/>
            <person name="Asamizu E."/>
            <person name="Kato T."/>
            <person name="Sasamoto S."/>
            <person name="Watanabe A."/>
            <person name="Idesawa K."/>
            <person name="Ishikawa A."/>
            <person name="Kawashima K."/>
            <person name="Kimura T."/>
            <person name="Kishida Y."/>
            <person name="Kiyokawa C."/>
            <person name="Kohara M."/>
            <person name="Matsumoto M."/>
            <person name="Matsuno A."/>
            <person name="Mochizuki Y."/>
            <person name="Nakayama S."/>
            <person name="Nakazaki N."/>
            <person name="Shimpo S."/>
            <person name="Sugimoto M."/>
            <person name="Takeuchi C."/>
            <person name="Yamada M."/>
            <person name="Tabata S."/>
        </authorList>
    </citation>
    <scope>NUCLEOTIDE SEQUENCE [LARGE SCALE GENOMIC DNA]</scope>
    <source>
        <strain>LMG 29417 / CECT 9101 / MAFF 303099</strain>
    </source>
</reference>
<protein>
    <recommendedName>
        <fullName evidence="1">L-threonine 3-dehydrogenase</fullName>
        <shortName evidence="1">TDH</shortName>
        <ecNumber evidence="1">1.1.1.103</ecNumber>
    </recommendedName>
</protein>
<feature type="chain" id="PRO_0000160850" description="L-threonine 3-dehydrogenase">
    <location>
        <begin position="1"/>
        <end position="344"/>
    </location>
</feature>
<feature type="active site" description="Charge relay system" evidence="1">
    <location>
        <position position="44"/>
    </location>
</feature>
<feature type="active site" description="Charge relay system" evidence="1">
    <location>
        <position position="47"/>
    </location>
</feature>
<feature type="binding site" evidence="1">
    <location>
        <position position="42"/>
    </location>
    <ligand>
        <name>Zn(2+)</name>
        <dbReference type="ChEBI" id="CHEBI:29105"/>
        <label>1</label>
        <note>catalytic</note>
    </ligand>
</feature>
<feature type="binding site" evidence="1">
    <location>
        <position position="67"/>
    </location>
    <ligand>
        <name>Zn(2+)</name>
        <dbReference type="ChEBI" id="CHEBI:29105"/>
        <label>1</label>
        <note>catalytic</note>
    </ligand>
</feature>
<feature type="binding site" evidence="1">
    <location>
        <position position="68"/>
    </location>
    <ligand>
        <name>Zn(2+)</name>
        <dbReference type="ChEBI" id="CHEBI:29105"/>
        <label>1</label>
        <note>catalytic</note>
    </ligand>
</feature>
<feature type="binding site" evidence="1">
    <location>
        <position position="97"/>
    </location>
    <ligand>
        <name>Zn(2+)</name>
        <dbReference type="ChEBI" id="CHEBI:29105"/>
        <label>2</label>
    </ligand>
</feature>
<feature type="binding site" evidence="1">
    <location>
        <position position="100"/>
    </location>
    <ligand>
        <name>Zn(2+)</name>
        <dbReference type="ChEBI" id="CHEBI:29105"/>
        <label>2</label>
    </ligand>
</feature>
<feature type="binding site" evidence="1">
    <location>
        <position position="103"/>
    </location>
    <ligand>
        <name>Zn(2+)</name>
        <dbReference type="ChEBI" id="CHEBI:29105"/>
        <label>2</label>
    </ligand>
</feature>
<feature type="binding site" evidence="1">
    <location>
        <position position="111"/>
    </location>
    <ligand>
        <name>Zn(2+)</name>
        <dbReference type="ChEBI" id="CHEBI:29105"/>
        <label>2</label>
    </ligand>
</feature>
<feature type="binding site" evidence="1">
    <location>
        <position position="179"/>
    </location>
    <ligand>
        <name>NAD(+)</name>
        <dbReference type="ChEBI" id="CHEBI:57540"/>
    </ligand>
</feature>
<feature type="binding site" evidence="1">
    <location>
        <position position="199"/>
    </location>
    <ligand>
        <name>NAD(+)</name>
        <dbReference type="ChEBI" id="CHEBI:57540"/>
    </ligand>
</feature>
<feature type="binding site" evidence="1">
    <location>
        <position position="204"/>
    </location>
    <ligand>
        <name>NAD(+)</name>
        <dbReference type="ChEBI" id="CHEBI:57540"/>
    </ligand>
</feature>
<feature type="binding site" evidence="1">
    <location>
        <begin position="266"/>
        <end position="268"/>
    </location>
    <ligand>
        <name>NAD(+)</name>
        <dbReference type="ChEBI" id="CHEBI:57540"/>
    </ligand>
</feature>
<feature type="binding site" evidence="1">
    <location>
        <begin position="290"/>
        <end position="291"/>
    </location>
    <ligand>
        <name>NAD(+)</name>
        <dbReference type="ChEBI" id="CHEBI:57540"/>
    </ligand>
</feature>
<feature type="site" description="Important for catalytic activity for the proton relay mechanism but does not participate directly in the coordination of zinc atom" evidence="1">
    <location>
        <position position="152"/>
    </location>
</feature>
<accession>Q983J7</accession>
<sequence>MSNMMKALVKAKAEPGIWMEEVPVPEIGPNDVLIKIRKTAICGTDVHIYNWDQWAQKTVPVPMVTGHEFVGTVADFGAAVTEYKVGQRVSGEGHIVCGHCRNCRAGRGHLCRNTLGVGVNRPGAFGEYLAIPQHNVVPIPDDVPDEIAAIFDPLGNAVHTALSFDLVGEDVLVTGAGPIGIMGALVAQCVGARKVVITDINPVRLALAKKLGVQHVVDASKEKLRDVMPVLGMTEGFDVGLEMSGAAPAFRDMIDTMNNGGKIAILGIAPTGFEIDWNKVIFKMLHLKGIYGREMFETWYKMIALVQGPLDVSGLITHRIGIDDFQEGFDAMRSGSSGKVVMDW</sequence>
<name>TDH_RHILO</name>